<accession>P0A2T2</accession>
<accession>Q04248</accession>
<accession>Q9AFW5</accession>
<geneLocation type="plasmid">
    <name>Invasion</name>
</geneLocation>
<dbReference type="EMBL" id="X58464">
    <property type="protein sequence ID" value="CAA41378.1"/>
    <property type="molecule type" value="Genomic_DNA"/>
</dbReference>
<dbReference type="PIR" id="S14646">
    <property type="entry name" value="S14646"/>
</dbReference>
<dbReference type="RefSeq" id="WP_005116773.1">
    <property type="nucleotide sequence ID" value="NZ_UYIS01000023.1"/>
</dbReference>
<dbReference type="SMR" id="P0A2T2"/>
<dbReference type="GO" id="GO:0003700">
    <property type="term" value="F:DNA-binding transcription factor activity"/>
    <property type="evidence" value="ECO:0007669"/>
    <property type="project" value="InterPro"/>
</dbReference>
<dbReference type="GO" id="GO:0043565">
    <property type="term" value="F:sequence-specific DNA binding"/>
    <property type="evidence" value="ECO:0007669"/>
    <property type="project" value="InterPro"/>
</dbReference>
<dbReference type="Gene3D" id="1.10.10.60">
    <property type="entry name" value="Homeodomain-like"/>
    <property type="match status" value="1"/>
</dbReference>
<dbReference type="InterPro" id="IPR009057">
    <property type="entry name" value="Homeodomain-like_sf"/>
</dbReference>
<dbReference type="InterPro" id="IPR018060">
    <property type="entry name" value="HTH_AraC"/>
</dbReference>
<dbReference type="InterPro" id="IPR018062">
    <property type="entry name" value="HTH_AraC-typ_CS"/>
</dbReference>
<dbReference type="InterPro" id="IPR020449">
    <property type="entry name" value="Tscrpt_reg_AraC-type_HTH"/>
</dbReference>
<dbReference type="PANTHER" id="PTHR43280">
    <property type="entry name" value="ARAC-FAMILY TRANSCRIPTIONAL REGULATOR"/>
    <property type="match status" value="1"/>
</dbReference>
<dbReference type="PANTHER" id="PTHR43280:SF33">
    <property type="entry name" value="HTH-TYPE TRANSCRIPTIONAL REGULATOR APPY-RELATED"/>
    <property type="match status" value="1"/>
</dbReference>
<dbReference type="Pfam" id="PF12833">
    <property type="entry name" value="HTH_18"/>
    <property type="match status" value="1"/>
</dbReference>
<dbReference type="PRINTS" id="PR00032">
    <property type="entry name" value="HTHARAC"/>
</dbReference>
<dbReference type="SMART" id="SM00342">
    <property type="entry name" value="HTH_ARAC"/>
    <property type="match status" value="1"/>
</dbReference>
<dbReference type="SUPFAM" id="SSF46689">
    <property type="entry name" value="Homeodomain-like"/>
    <property type="match status" value="1"/>
</dbReference>
<dbReference type="PROSITE" id="PS00041">
    <property type="entry name" value="HTH_ARAC_FAMILY_1"/>
    <property type="match status" value="1"/>
</dbReference>
<dbReference type="PROSITE" id="PS01124">
    <property type="entry name" value="HTH_ARAC_FAMILY_2"/>
    <property type="match status" value="1"/>
</dbReference>
<evidence type="ECO:0000250" key="1"/>
<evidence type="ECO:0000250" key="2">
    <source>
        <dbReference type="UniProtKB" id="P0A2T1"/>
    </source>
</evidence>
<evidence type="ECO:0000250" key="3">
    <source>
        <dbReference type="UniProtKB" id="P16114"/>
    </source>
</evidence>
<evidence type="ECO:0000255" key="4">
    <source>
        <dbReference type="PROSITE-ProRule" id="PRU00593"/>
    </source>
</evidence>
<keyword id="KW-0010">Activator</keyword>
<keyword id="KW-0238">DNA-binding</keyword>
<keyword id="KW-0614">Plasmid</keyword>
<keyword id="KW-0804">Transcription</keyword>
<keyword id="KW-0805">Transcription regulation</keyword>
<keyword id="KW-0843">Virulence</keyword>
<proteinExistence type="inferred from homology"/>
<comment type="function">
    <text evidence="1 2">Primary regulator of plasmid-encoded virulence genes. Activates the transcription of icsA (virG) and of virB, which is an activator of the ipaABCD virulence regulon (By similarity).</text>
</comment>
<comment type="subunit">
    <text evidence="3">Homodimer.</text>
</comment>
<reference key="1">
    <citation type="submission" date="1991-03" db="EMBL/GenBank/DDBJ databases">
        <title>DNA sequence of the virF gene from Shigella dysenteriae.</title>
        <authorList>
            <person name="Yao R."/>
            <person name="Reddy L.V."/>
            <person name="Palchaudhuri S."/>
        </authorList>
    </citation>
    <scope>NUCLEOTIDE SEQUENCE [GENOMIC DNA]</scope>
    <source>
        <strain>CG097</strain>
    </source>
</reference>
<feature type="chain" id="PRO_0000194593" description="Virulence regulon transcriptional activator VirF">
    <location>
        <begin position="1"/>
        <end position="262"/>
    </location>
</feature>
<feature type="domain" description="HTH araC/xylS-type" evidence="4">
    <location>
        <begin position="161"/>
        <end position="258"/>
    </location>
</feature>
<feature type="DNA-binding region" description="H-T-H motif" evidence="4">
    <location>
        <begin position="178"/>
        <end position="199"/>
    </location>
</feature>
<feature type="DNA-binding region" description="H-T-H motif" evidence="4">
    <location>
        <begin position="225"/>
        <end position="248"/>
    </location>
</feature>
<name>VIRF_SHIDY</name>
<protein>
    <recommendedName>
        <fullName>Virulence regulon transcriptional activator VirF</fullName>
    </recommendedName>
</protein>
<gene>
    <name type="primary">virF</name>
</gene>
<organism>
    <name type="scientific">Shigella dysenteriae</name>
    <dbReference type="NCBI Taxonomy" id="622"/>
    <lineage>
        <taxon>Bacteria</taxon>
        <taxon>Pseudomonadati</taxon>
        <taxon>Pseudomonadota</taxon>
        <taxon>Gammaproteobacteria</taxon>
        <taxon>Enterobacterales</taxon>
        <taxon>Enterobacteriaceae</taxon>
        <taxon>Shigella</taxon>
    </lineage>
</organism>
<sequence length="262" mass="30550">MMDMGHKNKIDIKVRLHNYIILYAKRCSMTVSSGNETLTIDEGQIAFIERNIQINVSIKKSDSINPFEIISLDRNLLLSIIRIMEPIYSFQHSYSEEKRGLNKKIFLLSEEEVSIDLFKSIKEMPFGKRKIYSLACLLSAVSDEEALYTSISIASSLSFSDQIRKIVEKNIEKRWRLSDISNNLNLSEIAVRKRLESEKLTFQQILLDIRMHHAAKLLLNSQSYINDVSRLIGISSPSYFIRKFNEYYGITPKKFYLYHKKF</sequence>